<accession>Q37430</accession>
<name>COX2_CAPHI</name>
<geneLocation type="mitochondrion"/>
<sequence>MAYPMQLGFQDATSPIMEELLHFHDHTLMIVFLISSLVLYIISLMLTTKLTHTSTMDAQEVETVWTILPAIILIMIALPSLRILYMMDEINNPSLTVKTMGHQWYWSYEYTDYEDLSFDSYMIPTSELKPGELRLLEVDNRVVLPMEMTIRMLISSEDVLHSWAVPSLGLKTDAIPGRLNQTTLMSTRPGLFYGQCSEICGSNHSFMPIVLELVPLKYFEKWSASML</sequence>
<evidence type="ECO:0000250" key="1">
    <source>
        <dbReference type="UniProtKB" id="P00403"/>
    </source>
</evidence>
<evidence type="ECO:0000250" key="2">
    <source>
        <dbReference type="UniProtKB" id="P00406"/>
    </source>
</evidence>
<evidence type="ECO:0000250" key="3">
    <source>
        <dbReference type="UniProtKB" id="P00410"/>
    </source>
</evidence>
<evidence type="ECO:0000250" key="4">
    <source>
        <dbReference type="UniProtKB" id="P68530"/>
    </source>
</evidence>
<evidence type="ECO:0000305" key="5"/>
<dbReference type="EC" id="7.1.1.9"/>
<dbReference type="EMBL" id="U62569">
    <property type="protein sequence ID" value="AAB05782.1"/>
    <property type="molecule type" value="Genomic_DNA"/>
</dbReference>
<dbReference type="SMR" id="Q37430"/>
<dbReference type="STRING" id="9925.ENSCHIP00000000004"/>
<dbReference type="Proteomes" id="UP000291000">
    <property type="component" value="Unassembled WGS sequence"/>
</dbReference>
<dbReference type="Proteomes" id="UP000694566">
    <property type="component" value="Unplaced"/>
</dbReference>
<dbReference type="GO" id="GO:0005743">
    <property type="term" value="C:mitochondrial inner membrane"/>
    <property type="evidence" value="ECO:0007669"/>
    <property type="project" value="UniProtKB-SubCell"/>
</dbReference>
<dbReference type="GO" id="GO:0045277">
    <property type="term" value="C:respiratory chain complex IV"/>
    <property type="evidence" value="ECO:0000250"/>
    <property type="project" value="UniProtKB"/>
</dbReference>
<dbReference type="GO" id="GO:0005507">
    <property type="term" value="F:copper ion binding"/>
    <property type="evidence" value="ECO:0007669"/>
    <property type="project" value="InterPro"/>
</dbReference>
<dbReference type="GO" id="GO:0004129">
    <property type="term" value="F:cytochrome-c oxidase activity"/>
    <property type="evidence" value="ECO:0007669"/>
    <property type="project" value="UniProtKB-EC"/>
</dbReference>
<dbReference type="GO" id="GO:0042773">
    <property type="term" value="P:ATP synthesis coupled electron transport"/>
    <property type="evidence" value="ECO:0007669"/>
    <property type="project" value="TreeGrafter"/>
</dbReference>
<dbReference type="CDD" id="cd13912">
    <property type="entry name" value="CcO_II_C"/>
    <property type="match status" value="1"/>
</dbReference>
<dbReference type="FunFam" id="1.10.287.90:FF:000001">
    <property type="entry name" value="Cytochrome c oxidase subunit 2"/>
    <property type="match status" value="1"/>
</dbReference>
<dbReference type="FunFam" id="2.60.40.420:FF:000001">
    <property type="entry name" value="Cytochrome c oxidase subunit 2"/>
    <property type="match status" value="1"/>
</dbReference>
<dbReference type="Gene3D" id="1.10.287.90">
    <property type="match status" value="1"/>
</dbReference>
<dbReference type="Gene3D" id="2.60.40.420">
    <property type="entry name" value="Cupredoxins - blue copper proteins"/>
    <property type="match status" value="1"/>
</dbReference>
<dbReference type="InterPro" id="IPR045187">
    <property type="entry name" value="CcO_II"/>
</dbReference>
<dbReference type="InterPro" id="IPR002429">
    <property type="entry name" value="CcO_II-like_C"/>
</dbReference>
<dbReference type="InterPro" id="IPR034210">
    <property type="entry name" value="CcO_II_C"/>
</dbReference>
<dbReference type="InterPro" id="IPR001505">
    <property type="entry name" value="Copper_CuA"/>
</dbReference>
<dbReference type="InterPro" id="IPR008972">
    <property type="entry name" value="Cupredoxin"/>
</dbReference>
<dbReference type="InterPro" id="IPR014222">
    <property type="entry name" value="Cyt_c_oxidase_su2"/>
</dbReference>
<dbReference type="InterPro" id="IPR011759">
    <property type="entry name" value="Cyt_c_oxidase_su2_TM_dom"/>
</dbReference>
<dbReference type="InterPro" id="IPR036257">
    <property type="entry name" value="Cyt_c_oxidase_su2_TM_sf"/>
</dbReference>
<dbReference type="NCBIfam" id="TIGR02866">
    <property type="entry name" value="CoxB"/>
    <property type="match status" value="1"/>
</dbReference>
<dbReference type="PANTHER" id="PTHR22888:SF9">
    <property type="entry name" value="CYTOCHROME C OXIDASE SUBUNIT 2"/>
    <property type="match status" value="1"/>
</dbReference>
<dbReference type="PANTHER" id="PTHR22888">
    <property type="entry name" value="CYTOCHROME C OXIDASE, SUBUNIT II"/>
    <property type="match status" value="1"/>
</dbReference>
<dbReference type="Pfam" id="PF00116">
    <property type="entry name" value="COX2"/>
    <property type="match status" value="1"/>
</dbReference>
<dbReference type="Pfam" id="PF02790">
    <property type="entry name" value="COX2_TM"/>
    <property type="match status" value="1"/>
</dbReference>
<dbReference type="PRINTS" id="PR01166">
    <property type="entry name" value="CYCOXIDASEII"/>
</dbReference>
<dbReference type="SUPFAM" id="SSF49503">
    <property type="entry name" value="Cupredoxins"/>
    <property type="match status" value="1"/>
</dbReference>
<dbReference type="SUPFAM" id="SSF81464">
    <property type="entry name" value="Cytochrome c oxidase subunit II-like, transmembrane region"/>
    <property type="match status" value="1"/>
</dbReference>
<dbReference type="PROSITE" id="PS00078">
    <property type="entry name" value="COX2"/>
    <property type="match status" value="1"/>
</dbReference>
<dbReference type="PROSITE" id="PS50857">
    <property type="entry name" value="COX2_CUA"/>
    <property type="match status" value="1"/>
</dbReference>
<dbReference type="PROSITE" id="PS50999">
    <property type="entry name" value="COX2_TM"/>
    <property type="match status" value="1"/>
</dbReference>
<proteinExistence type="inferred from homology"/>
<reference key="1">
    <citation type="journal article" date="1996" name="Mol. Phylogenet. Evol.">
        <title>Mitochondrial gene sequences and the molecular systematics of the artiodactyl subfamily bovinae.</title>
        <authorList>
            <person name="Janecek L.L."/>
            <person name="Honeycutt R.L."/>
            <person name="Adkins R.M."/>
            <person name="Davis S.K."/>
        </authorList>
    </citation>
    <scope>NUCLEOTIDE SEQUENCE [GENOMIC DNA]</scope>
</reference>
<organism>
    <name type="scientific">Capra hircus</name>
    <name type="common">Goat</name>
    <dbReference type="NCBI Taxonomy" id="9925"/>
    <lineage>
        <taxon>Eukaryota</taxon>
        <taxon>Metazoa</taxon>
        <taxon>Chordata</taxon>
        <taxon>Craniata</taxon>
        <taxon>Vertebrata</taxon>
        <taxon>Euteleostomi</taxon>
        <taxon>Mammalia</taxon>
        <taxon>Eutheria</taxon>
        <taxon>Laurasiatheria</taxon>
        <taxon>Artiodactyla</taxon>
        <taxon>Ruminantia</taxon>
        <taxon>Pecora</taxon>
        <taxon>Bovidae</taxon>
        <taxon>Caprinae</taxon>
        <taxon>Capra</taxon>
    </lineage>
</organism>
<gene>
    <name type="primary">MT-CO2</name>
    <name type="synonym">COII</name>
    <name type="synonym">COX2</name>
    <name type="synonym">COXII</name>
    <name type="synonym">MTCO2</name>
</gene>
<protein>
    <recommendedName>
        <fullName>Cytochrome c oxidase subunit 2</fullName>
        <ecNumber>7.1.1.9</ecNumber>
    </recommendedName>
    <alternativeName>
        <fullName>Cytochrome c oxidase polypeptide II</fullName>
    </alternativeName>
</protein>
<keyword id="KW-0186">Copper</keyword>
<keyword id="KW-0249">Electron transport</keyword>
<keyword id="KW-0460">Magnesium</keyword>
<keyword id="KW-0472">Membrane</keyword>
<keyword id="KW-0479">Metal-binding</keyword>
<keyword id="KW-0496">Mitochondrion</keyword>
<keyword id="KW-0999">Mitochondrion inner membrane</keyword>
<keyword id="KW-0597">Phosphoprotein</keyword>
<keyword id="KW-1185">Reference proteome</keyword>
<keyword id="KW-0679">Respiratory chain</keyword>
<keyword id="KW-1278">Translocase</keyword>
<keyword id="KW-0812">Transmembrane</keyword>
<keyword id="KW-1133">Transmembrane helix</keyword>
<keyword id="KW-0813">Transport</keyword>
<feature type="chain" id="PRO_0000183538" description="Cytochrome c oxidase subunit 2">
    <location>
        <begin position="1"/>
        <end position="227"/>
    </location>
</feature>
<feature type="topological domain" description="Mitochondrial intermembrane" evidence="4">
    <location>
        <begin position="1"/>
        <end position="14"/>
    </location>
</feature>
<feature type="transmembrane region" description="Helical; Name=I" evidence="4">
    <location>
        <begin position="15"/>
        <end position="45"/>
    </location>
</feature>
<feature type="topological domain" description="Mitochondrial matrix" evidence="4">
    <location>
        <begin position="46"/>
        <end position="59"/>
    </location>
</feature>
<feature type="transmembrane region" description="Helical; Name=II" evidence="4">
    <location>
        <begin position="60"/>
        <end position="87"/>
    </location>
</feature>
<feature type="topological domain" description="Mitochondrial intermembrane" evidence="4">
    <location>
        <begin position="88"/>
        <end position="227"/>
    </location>
</feature>
<feature type="binding site" evidence="4">
    <location>
        <position position="161"/>
    </location>
    <ligand>
        <name>Cu cation</name>
        <dbReference type="ChEBI" id="CHEBI:23378"/>
        <label>A1</label>
    </ligand>
</feature>
<feature type="binding site" evidence="4">
    <location>
        <position position="196"/>
    </location>
    <ligand>
        <name>Cu cation</name>
        <dbReference type="ChEBI" id="CHEBI:23378"/>
        <label>A1</label>
    </ligand>
</feature>
<feature type="binding site" evidence="4">
    <location>
        <position position="196"/>
    </location>
    <ligand>
        <name>Cu cation</name>
        <dbReference type="ChEBI" id="CHEBI:23378"/>
        <label>A2</label>
    </ligand>
</feature>
<feature type="binding site" evidence="4">
    <location>
        <position position="198"/>
    </location>
    <ligand>
        <name>Cu cation</name>
        <dbReference type="ChEBI" id="CHEBI:23378"/>
        <label>A2</label>
    </ligand>
</feature>
<feature type="binding site" evidence="4">
    <location>
        <position position="198"/>
    </location>
    <ligand>
        <name>Mg(2+)</name>
        <dbReference type="ChEBI" id="CHEBI:18420"/>
        <note>ligand shared with MT-CO1</note>
    </ligand>
</feature>
<feature type="binding site" evidence="4">
    <location>
        <position position="200"/>
    </location>
    <ligand>
        <name>Cu cation</name>
        <dbReference type="ChEBI" id="CHEBI:23378"/>
        <label>A1</label>
    </ligand>
</feature>
<feature type="binding site" evidence="4">
    <location>
        <position position="200"/>
    </location>
    <ligand>
        <name>Cu cation</name>
        <dbReference type="ChEBI" id="CHEBI:23378"/>
        <label>A2</label>
    </ligand>
</feature>
<feature type="binding site" evidence="4">
    <location>
        <position position="204"/>
    </location>
    <ligand>
        <name>Cu cation</name>
        <dbReference type="ChEBI" id="CHEBI:23378"/>
        <label>A2</label>
    </ligand>
</feature>
<feature type="binding site" evidence="4">
    <location>
        <position position="207"/>
    </location>
    <ligand>
        <name>Cu cation</name>
        <dbReference type="ChEBI" id="CHEBI:23378"/>
        <label>A1</label>
    </ligand>
</feature>
<feature type="modified residue" description="Phosphotyrosine" evidence="2">
    <location>
        <position position="218"/>
    </location>
</feature>
<comment type="function">
    <text evidence="3">Component of the cytochrome c oxidase, the last enzyme in the mitochondrial electron transport chain which drives oxidative phosphorylation. The respiratory chain contains 3 multisubunit complexes succinate dehydrogenase (complex II, CII), ubiquinol-cytochrome c oxidoreductase (cytochrome b-c1 complex, complex III, CIII) and cytochrome c oxidase (complex IV, CIV), that cooperate to transfer electrons derived from NADH and succinate to molecular oxygen, creating an electrochemical gradient over the inner membrane that drives transmembrane transport and the ATP synthase. Cytochrome c oxidase is the component of the respiratory chain that catalyzes the reduction of oxygen to water. Electrons originating from reduced cytochrome c in the intermembrane space (IMS) are transferred via the dinuclear copper A center (CU(A)) of subunit 2 and heme A of subunit 1 to the active site in subunit 1, a binuclear center (BNC) formed by heme A3 and copper B (CU(B)). The BNC reduces molecular oxygen to 2 water molecules using 4 electrons from cytochrome c in the IMS and 4 protons from the mitochondrial matrix.</text>
</comment>
<comment type="catalytic activity">
    <reaction evidence="3">
        <text>4 Fe(II)-[cytochrome c] + O2 + 8 H(+)(in) = 4 Fe(III)-[cytochrome c] + 2 H2O + 4 H(+)(out)</text>
        <dbReference type="Rhea" id="RHEA:11436"/>
        <dbReference type="Rhea" id="RHEA-COMP:10350"/>
        <dbReference type="Rhea" id="RHEA-COMP:14399"/>
        <dbReference type="ChEBI" id="CHEBI:15377"/>
        <dbReference type="ChEBI" id="CHEBI:15378"/>
        <dbReference type="ChEBI" id="CHEBI:15379"/>
        <dbReference type="ChEBI" id="CHEBI:29033"/>
        <dbReference type="ChEBI" id="CHEBI:29034"/>
        <dbReference type="EC" id="7.1.1.9"/>
    </reaction>
    <physiologicalReaction direction="left-to-right" evidence="3">
        <dbReference type="Rhea" id="RHEA:11437"/>
    </physiologicalReaction>
</comment>
<comment type="cofactor">
    <cofactor evidence="4">
        <name>Cu cation</name>
        <dbReference type="ChEBI" id="CHEBI:23378"/>
    </cofactor>
    <text evidence="4">Binds a dinuclear copper A center per subunit.</text>
</comment>
<comment type="subunit">
    <text evidence="1 4">Component of the cytochrome c oxidase (complex IV, CIV), a multisubunit enzyme composed of 14 subunits. The complex is composed of a catalytic core of 3 subunits MT-CO1, MT-CO2 and MT-CO3, encoded in the mitochondrial DNA, and 11 supernumerary subunits COX4I, COX5A, COX5B, COX6A, COX6B, COX6C, COX7A, COX7B, COX7C, COX8 and NDUFA4, which are encoded in the nuclear genome. The complex exists as a monomer or a dimer and forms supercomplexes (SCs) in the inner mitochondrial membrane with NADH-ubiquinone oxidoreductase (complex I, CI) and ubiquinol-cytochrome c oxidoreductase (cytochrome b-c1 complex, complex III, CIII), resulting in different assemblies (supercomplex SCI(1)III(2)IV(1) and megacomplex MCI(2)III(2)IV(2)) (By similarity). Found in a complex with TMEM177, COA6, COX18, COX20, SCO1 and SCO2. Interacts with TMEM177 in a COX20-dependent manner. Interacts with COX20. Interacts with COX16 (By similarity).</text>
</comment>
<comment type="subcellular location">
    <subcellularLocation>
        <location evidence="4">Mitochondrion inner membrane</location>
        <topology evidence="4">Multi-pass membrane protein</topology>
    </subcellularLocation>
</comment>
<comment type="similarity">
    <text evidence="5">Belongs to the cytochrome c oxidase subunit 2 family.</text>
</comment>